<comment type="function">
    <text>Possible developmental regulator.</text>
</comment>
<comment type="subcellular location">
    <subcellularLocation>
        <location evidence="3">Nucleus</location>
    </subcellularLocation>
</comment>
<comment type="tissue specificity">
    <text>In roots, stems and cotyledons of one-week old seedlings. In mature plants, in young leaves from first level below flowers as well as in flower buds and open flowers.</text>
</comment>
<comment type="induction">
    <text>By wounding; up to 7-fold increase.</text>
</comment>
<comment type="similarity">
    <text evidence="2">Belongs to the TALE/KNOX homeobox family.</text>
</comment>
<sequence>MQEAALGMIGATVGGGGDGDAAVVAEQNRQMKGEIATHPMYDQLLAAHVACLRVATPIDQLPIIEAQLSHSHHLLRSYASTAVGFSHHDRQELDNFLAQYVMVLCSFKEQLQQHVRVHAVEAVMACREIENNLHSLTGATLGEGSGATMSEDEDDLQMDFSSDNSGVDFSGGHDMTGFGPLLPTESERSLMERVRQELKLELKQGFKSRIEDVREEIMRKRRAGKLPGDTTTVLKNWWQQHCKWPYPTEDDKAKLVEETGLQLKQINNWFINQRKRNWHNNSHSLTSLKSKRKH</sequence>
<accession>P46606</accession>
<gene>
    <name type="primary">HD1</name>
</gene>
<feature type="chain" id="PRO_0000048909" description="Homeobox protein HD1">
    <location>
        <begin position="1"/>
        <end position="294"/>
    </location>
</feature>
<feature type="domain" description="ELK" evidence="2">
    <location>
        <begin position="197"/>
        <end position="217"/>
    </location>
</feature>
<feature type="DNA-binding region" description="Homeobox; TALE-type" evidence="1">
    <location>
        <begin position="218"/>
        <end position="281"/>
    </location>
</feature>
<protein>
    <recommendedName>
        <fullName>Homeobox protein HD1</fullName>
    </recommendedName>
</protein>
<reference key="1">
    <citation type="journal article" date="1994" name="Biochim. Biophys. Acta">
        <title>Stage-specific transcription of the homeobox gene Bnhd1 in young tissues and flowers of Brassica napus.</title>
        <authorList>
            <person name="Boivin R."/>
            <person name="Hamel F."/>
            <person name="Beauseigle D."/>
            <person name="Bellemare G."/>
        </authorList>
    </citation>
    <scope>NUCLEOTIDE SEQUENCE [MRNA]</scope>
    <source>
        <strain>cv. Westar</strain>
        <tissue>Seedling</tissue>
    </source>
</reference>
<keyword id="KW-0238">DNA-binding</keyword>
<keyword id="KW-0371">Homeobox</keyword>
<keyword id="KW-0539">Nucleus</keyword>
<organism>
    <name type="scientific">Brassica napus</name>
    <name type="common">Rape</name>
    <dbReference type="NCBI Taxonomy" id="3708"/>
    <lineage>
        <taxon>Eukaryota</taxon>
        <taxon>Viridiplantae</taxon>
        <taxon>Streptophyta</taxon>
        <taxon>Embryophyta</taxon>
        <taxon>Tracheophyta</taxon>
        <taxon>Spermatophyta</taxon>
        <taxon>Magnoliopsida</taxon>
        <taxon>eudicotyledons</taxon>
        <taxon>Gunneridae</taxon>
        <taxon>Pentapetalae</taxon>
        <taxon>rosids</taxon>
        <taxon>malvids</taxon>
        <taxon>Brassicales</taxon>
        <taxon>Brassicaceae</taxon>
        <taxon>Brassiceae</taxon>
        <taxon>Brassica</taxon>
    </lineage>
</organism>
<name>HD1_BRANA</name>
<proteinExistence type="evidence at transcript level"/>
<dbReference type="EMBL" id="Z29073">
    <property type="protein sequence ID" value="CAA82314.1"/>
    <property type="molecule type" value="mRNA"/>
</dbReference>
<dbReference type="PIR" id="S47535">
    <property type="entry name" value="S47535"/>
</dbReference>
<dbReference type="RefSeq" id="NP_001302915.1">
    <property type="nucleotide sequence ID" value="NM_001315986.1"/>
</dbReference>
<dbReference type="SMR" id="P46606"/>
<dbReference type="GeneID" id="106394496"/>
<dbReference type="KEGG" id="bna:106394496"/>
<dbReference type="OrthoDB" id="1046535at2759"/>
<dbReference type="GO" id="GO:0005634">
    <property type="term" value="C:nucleus"/>
    <property type="evidence" value="ECO:0007669"/>
    <property type="project" value="UniProtKB-SubCell"/>
</dbReference>
<dbReference type="GO" id="GO:0003677">
    <property type="term" value="F:DNA binding"/>
    <property type="evidence" value="ECO:0007669"/>
    <property type="project" value="UniProtKB-KW"/>
</dbReference>
<dbReference type="GO" id="GO:0006355">
    <property type="term" value="P:regulation of DNA-templated transcription"/>
    <property type="evidence" value="ECO:0007669"/>
    <property type="project" value="InterPro"/>
</dbReference>
<dbReference type="CDD" id="cd00086">
    <property type="entry name" value="homeodomain"/>
    <property type="match status" value="1"/>
</dbReference>
<dbReference type="FunFam" id="1.10.10.60:FF:000143">
    <property type="entry name" value="homeobox protein knotted-1-like 3 isoform X1"/>
    <property type="match status" value="1"/>
</dbReference>
<dbReference type="Gene3D" id="1.10.10.60">
    <property type="entry name" value="Homeodomain-like"/>
    <property type="match status" value="1"/>
</dbReference>
<dbReference type="InterPro" id="IPR005539">
    <property type="entry name" value="ELK_dom"/>
</dbReference>
<dbReference type="InterPro" id="IPR001356">
    <property type="entry name" value="HD"/>
</dbReference>
<dbReference type="InterPro" id="IPR009057">
    <property type="entry name" value="Homeodomain-like_sf"/>
</dbReference>
<dbReference type="InterPro" id="IPR008422">
    <property type="entry name" value="KN_HD"/>
</dbReference>
<dbReference type="InterPro" id="IPR005540">
    <property type="entry name" value="KNOX1"/>
</dbReference>
<dbReference type="InterPro" id="IPR005541">
    <property type="entry name" value="KNOX2"/>
</dbReference>
<dbReference type="InterPro" id="IPR050224">
    <property type="entry name" value="TALE_homeobox"/>
</dbReference>
<dbReference type="PANTHER" id="PTHR11850">
    <property type="entry name" value="HOMEOBOX PROTEIN TRANSCRIPTION FACTORS"/>
    <property type="match status" value="1"/>
</dbReference>
<dbReference type="Pfam" id="PF05920">
    <property type="entry name" value="Homeobox_KN"/>
    <property type="match status" value="1"/>
</dbReference>
<dbReference type="Pfam" id="PF03790">
    <property type="entry name" value="KNOX1"/>
    <property type="match status" value="1"/>
</dbReference>
<dbReference type="Pfam" id="PF03791">
    <property type="entry name" value="KNOX2"/>
    <property type="match status" value="1"/>
</dbReference>
<dbReference type="SMART" id="SM00389">
    <property type="entry name" value="HOX"/>
    <property type="match status" value="1"/>
</dbReference>
<dbReference type="SMART" id="SM01255">
    <property type="entry name" value="KNOX1"/>
    <property type="match status" value="1"/>
</dbReference>
<dbReference type="SMART" id="SM01256">
    <property type="entry name" value="KNOX2"/>
    <property type="match status" value="1"/>
</dbReference>
<dbReference type="SUPFAM" id="SSF46689">
    <property type="entry name" value="Homeodomain-like"/>
    <property type="match status" value="1"/>
</dbReference>
<dbReference type="PROSITE" id="PS51213">
    <property type="entry name" value="ELK"/>
    <property type="match status" value="1"/>
</dbReference>
<dbReference type="PROSITE" id="PS00027">
    <property type="entry name" value="HOMEOBOX_1"/>
    <property type="match status" value="1"/>
</dbReference>
<dbReference type="PROSITE" id="PS50071">
    <property type="entry name" value="HOMEOBOX_2"/>
    <property type="match status" value="1"/>
</dbReference>
<evidence type="ECO:0000255" key="1">
    <source>
        <dbReference type="PROSITE-ProRule" id="PRU00108"/>
    </source>
</evidence>
<evidence type="ECO:0000255" key="2">
    <source>
        <dbReference type="PROSITE-ProRule" id="PRU00559"/>
    </source>
</evidence>
<evidence type="ECO:0000305" key="3"/>